<dbReference type="EMBL" id="AB076821">
    <property type="protein sequence ID" value="BAC75906.1"/>
    <property type="molecule type" value="Genomic_DNA"/>
</dbReference>
<dbReference type="EMBL" id="AB076822">
    <property type="protein sequence ID" value="BAC75907.1"/>
    <property type="molecule type" value="Genomic_DNA"/>
</dbReference>
<dbReference type="EMBL" id="AB076823">
    <property type="protein sequence ID" value="BAC75908.1"/>
    <property type="molecule type" value="Genomic_DNA"/>
</dbReference>
<dbReference type="EMBL" id="AB076824">
    <property type="protein sequence ID" value="BAC75909.1"/>
    <property type="molecule type" value="Genomic_DNA"/>
</dbReference>
<dbReference type="EMBL" id="AB076825">
    <property type="protein sequence ID" value="BAC75910.1"/>
    <property type="molecule type" value="Genomic_DNA"/>
</dbReference>
<dbReference type="EMBL" id="AB076826">
    <property type="protein sequence ID" value="BAC75911.1"/>
    <property type="molecule type" value="Genomic_DNA"/>
</dbReference>
<dbReference type="EMBL" id="AB076827">
    <property type="protein sequence ID" value="BAC75912.1"/>
    <property type="molecule type" value="Genomic_DNA"/>
</dbReference>
<dbReference type="SMR" id="Q85C06"/>
<dbReference type="GO" id="GO:0005743">
    <property type="term" value="C:mitochondrial inner membrane"/>
    <property type="evidence" value="ECO:0007669"/>
    <property type="project" value="UniProtKB-SubCell"/>
</dbReference>
<dbReference type="GO" id="GO:0045275">
    <property type="term" value="C:respiratory chain complex III"/>
    <property type="evidence" value="ECO:0007669"/>
    <property type="project" value="InterPro"/>
</dbReference>
<dbReference type="GO" id="GO:0046872">
    <property type="term" value="F:metal ion binding"/>
    <property type="evidence" value="ECO:0007669"/>
    <property type="project" value="UniProtKB-KW"/>
</dbReference>
<dbReference type="GO" id="GO:0008121">
    <property type="term" value="F:ubiquinol-cytochrome-c reductase activity"/>
    <property type="evidence" value="ECO:0007669"/>
    <property type="project" value="InterPro"/>
</dbReference>
<dbReference type="GO" id="GO:0006122">
    <property type="term" value="P:mitochondrial electron transport, ubiquinol to cytochrome c"/>
    <property type="evidence" value="ECO:0007669"/>
    <property type="project" value="TreeGrafter"/>
</dbReference>
<dbReference type="CDD" id="cd00290">
    <property type="entry name" value="cytochrome_b_C"/>
    <property type="match status" value="1"/>
</dbReference>
<dbReference type="CDD" id="cd00284">
    <property type="entry name" value="Cytochrome_b_N"/>
    <property type="match status" value="1"/>
</dbReference>
<dbReference type="FunFam" id="1.20.810.10:FF:000002">
    <property type="entry name" value="Cytochrome b"/>
    <property type="match status" value="1"/>
</dbReference>
<dbReference type="Gene3D" id="1.20.810.10">
    <property type="entry name" value="Cytochrome Bc1 Complex, Chain C"/>
    <property type="match status" value="1"/>
</dbReference>
<dbReference type="InterPro" id="IPR005798">
    <property type="entry name" value="Cyt_b/b6_C"/>
</dbReference>
<dbReference type="InterPro" id="IPR036150">
    <property type="entry name" value="Cyt_b/b6_C_sf"/>
</dbReference>
<dbReference type="InterPro" id="IPR005797">
    <property type="entry name" value="Cyt_b/b6_N"/>
</dbReference>
<dbReference type="InterPro" id="IPR027387">
    <property type="entry name" value="Cytb/b6-like_sf"/>
</dbReference>
<dbReference type="InterPro" id="IPR030689">
    <property type="entry name" value="Cytochrome_b"/>
</dbReference>
<dbReference type="InterPro" id="IPR048260">
    <property type="entry name" value="Cytochrome_b_C_euk/bac"/>
</dbReference>
<dbReference type="InterPro" id="IPR048259">
    <property type="entry name" value="Cytochrome_b_N_euk/bac"/>
</dbReference>
<dbReference type="InterPro" id="IPR016174">
    <property type="entry name" value="Di-haem_cyt_TM"/>
</dbReference>
<dbReference type="PANTHER" id="PTHR19271">
    <property type="entry name" value="CYTOCHROME B"/>
    <property type="match status" value="1"/>
</dbReference>
<dbReference type="PANTHER" id="PTHR19271:SF16">
    <property type="entry name" value="CYTOCHROME B"/>
    <property type="match status" value="1"/>
</dbReference>
<dbReference type="Pfam" id="PF00032">
    <property type="entry name" value="Cytochrom_B_C"/>
    <property type="match status" value="1"/>
</dbReference>
<dbReference type="Pfam" id="PF00033">
    <property type="entry name" value="Cytochrome_B"/>
    <property type="match status" value="1"/>
</dbReference>
<dbReference type="PIRSF" id="PIRSF038885">
    <property type="entry name" value="COB"/>
    <property type="match status" value="1"/>
</dbReference>
<dbReference type="SUPFAM" id="SSF81648">
    <property type="entry name" value="a domain/subunit of cytochrome bc1 complex (Ubiquinol-cytochrome c reductase)"/>
    <property type="match status" value="1"/>
</dbReference>
<dbReference type="SUPFAM" id="SSF81342">
    <property type="entry name" value="Transmembrane di-heme cytochromes"/>
    <property type="match status" value="1"/>
</dbReference>
<dbReference type="PROSITE" id="PS51003">
    <property type="entry name" value="CYTB_CTER"/>
    <property type="match status" value="1"/>
</dbReference>
<dbReference type="PROSITE" id="PS51002">
    <property type="entry name" value="CYTB_NTER"/>
    <property type="match status" value="1"/>
</dbReference>
<proteinExistence type="inferred from homology"/>
<name>CYB_NEUGI</name>
<gene>
    <name type="primary">MT-CYB</name>
    <name type="synonym">COB</name>
    <name type="synonym">CYTB</name>
    <name type="synonym">MTCYB</name>
</gene>
<comment type="function">
    <text evidence="2">Component of the ubiquinol-cytochrome c reductase complex (complex III or cytochrome b-c1 complex) that is part of the mitochondrial respiratory chain. The b-c1 complex mediates electron transfer from ubiquinol to cytochrome c. Contributes to the generation of a proton gradient across the mitochondrial membrane that is then used for ATP synthesis.</text>
</comment>
<comment type="cofactor">
    <cofactor evidence="2">
        <name>heme b</name>
        <dbReference type="ChEBI" id="CHEBI:60344"/>
    </cofactor>
    <text evidence="2">Binds 2 heme b groups non-covalently.</text>
</comment>
<comment type="subunit">
    <text evidence="2">The cytochrome bc1 complex contains 11 subunits: 3 respiratory subunits (MT-CYB, CYC1 and UQCRFS1), 2 core proteins (UQCRC1 and UQCRC2) and 6 low-molecular weight proteins (UQCRH/QCR6, UQCRB/QCR7, UQCRQ/QCR8, UQCR10/QCR9, UQCR11/QCR10 and a cleavage product of UQCRFS1). This cytochrome bc1 complex then forms a dimer.</text>
</comment>
<comment type="subcellular location">
    <subcellularLocation>
        <location evidence="2">Mitochondrion inner membrane</location>
        <topology evidence="2">Multi-pass membrane protein</topology>
    </subcellularLocation>
</comment>
<comment type="miscellaneous">
    <text evidence="1">Heme 1 (or BL or b562) is low-potential and absorbs at about 562 nm, and heme 2 (or BH or b566) is high-potential and absorbs at about 566 nm.</text>
</comment>
<comment type="similarity">
    <text evidence="3 4">Belongs to the cytochrome b family.</text>
</comment>
<comment type="caution">
    <text evidence="2">The full-length protein contains only eight transmembrane helices, not nine as predicted by bioinformatics tools.</text>
</comment>
<organism>
    <name type="scientific">Neurotrichus gibbsii</name>
    <name type="common">American shrew mole</name>
    <dbReference type="NCBI Taxonomy" id="182677"/>
    <lineage>
        <taxon>Eukaryota</taxon>
        <taxon>Metazoa</taxon>
        <taxon>Chordata</taxon>
        <taxon>Craniata</taxon>
        <taxon>Vertebrata</taxon>
        <taxon>Euteleostomi</taxon>
        <taxon>Mammalia</taxon>
        <taxon>Eutheria</taxon>
        <taxon>Laurasiatheria</taxon>
        <taxon>Eulipotyphla</taxon>
        <taxon>Talpidae</taxon>
        <taxon>Neurotrichus</taxon>
    </lineage>
</organism>
<geneLocation type="mitochondrion"/>
<keyword id="KW-0249">Electron transport</keyword>
<keyword id="KW-0349">Heme</keyword>
<keyword id="KW-0408">Iron</keyword>
<keyword id="KW-0472">Membrane</keyword>
<keyword id="KW-0479">Metal-binding</keyword>
<keyword id="KW-0496">Mitochondrion</keyword>
<keyword id="KW-0999">Mitochondrion inner membrane</keyword>
<keyword id="KW-0679">Respiratory chain</keyword>
<keyword id="KW-0812">Transmembrane</keyword>
<keyword id="KW-1133">Transmembrane helix</keyword>
<keyword id="KW-0813">Transport</keyword>
<keyword id="KW-0830">Ubiquinone</keyword>
<feature type="chain" id="PRO_0000061274" description="Cytochrome b">
    <location>
        <begin position="1"/>
        <end position="379"/>
    </location>
</feature>
<feature type="transmembrane region" description="Helical" evidence="2">
    <location>
        <begin position="33"/>
        <end position="53"/>
    </location>
</feature>
<feature type="transmembrane region" description="Helical" evidence="2">
    <location>
        <begin position="77"/>
        <end position="98"/>
    </location>
</feature>
<feature type="transmembrane region" description="Helical" evidence="2">
    <location>
        <begin position="113"/>
        <end position="133"/>
    </location>
</feature>
<feature type="transmembrane region" description="Helical" evidence="2">
    <location>
        <begin position="178"/>
        <end position="198"/>
    </location>
</feature>
<feature type="transmembrane region" description="Helical" evidence="2">
    <location>
        <begin position="226"/>
        <end position="246"/>
    </location>
</feature>
<feature type="transmembrane region" description="Helical" evidence="2">
    <location>
        <begin position="288"/>
        <end position="308"/>
    </location>
</feature>
<feature type="transmembrane region" description="Helical" evidence="2">
    <location>
        <begin position="320"/>
        <end position="340"/>
    </location>
</feature>
<feature type="transmembrane region" description="Helical" evidence="2">
    <location>
        <begin position="347"/>
        <end position="367"/>
    </location>
</feature>
<feature type="binding site" description="axial binding residue" evidence="2">
    <location>
        <position position="83"/>
    </location>
    <ligand>
        <name>heme b</name>
        <dbReference type="ChEBI" id="CHEBI:60344"/>
        <label>b562</label>
    </ligand>
    <ligandPart>
        <name>Fe</name>
        <dbReference type="ChEBI" id="CHEBI:18248"/>
    </ligandPart>
</feature>
<feature type="binding site" description="axial binding residue" evidence="2">
    <location>
        <position position="97"/>
    </location>
    <ligand>
        <name>heme b</name>
        <dbReference type="ChEBI" id="CHEBI:60344"/>
        <label>b566</label>
    </ligand>
    <ligandPart>
        <name>Fe</name>
        <dbReference type="ChEBI" id="CHEBI:18248"/>
    </ligandPart>
</feature>
<feature type="binding site" description="axial binding residue" evidence="2">
    <location>
        <position position="182"/>
    </location>
    <ligand>
        <name>heme b</name>
        <dbReference type="ChEBI" id="CHEBI:60344"/>
        <label>b562</label>
    </ligand>
    <ligandPart>
        <name>Fe</name>
        <dbReference type="ChEBI" id="CHEBI:18248"/>
    </ligandPart>
</feature>
<feature type="binding site" description="axial binding residue" evidence="2">
    <location>
        <position position="196"/>
    </location>
    <ligand>
        <name>heme b</name>
        <dbReference type="ChEBI" id="CHEBI:60344"/>
        <label>b566</label>
    </ligand>
    <ligandPart>
        <name>Fe</name>
        <dbReference type="ChEBI" id="CHEBI:18248"/>
    </ligandPart>
</feature>
<feature type="binding site" evidence="2">
    <location>
        <position position="201"/>
    </location>
    <ligand>
        <name>a ubiquinone</name>
        <dbReference type="ChEBI" id="CHEBI:16389"/>
    </ligand>
</feature>
<feature type="sequence variant" description="In strain: Isolate SAS-5.">
    <original>L</original>
    <variation>F</variation>
    <location>
        <position position="102"/>
    </location>
</feature>
<feature type="sequence variant" description="In strain: Isolate SAS-6.">
    <original>I</original>
    <variation>T</variation>
    <location>
        <position position="229"/>
    </location>
</feature>
<reference key="1">
    <citation type="journal article" date="2003" name="Mol. Phylogenet. Evol.">
        <title>Molecular phylogenetic relationships of moles, shrew moles, and desmans from the new and old worlds.</title>
        <authorList>
            <person name="Shinohara A."/>
            <person name="Campbell K.L."/>
            <person name="Suzuki H."/>
        </authorList>
    </citation>
    <scope>NUCLEOTIDE SEQUENCE [GENOMIC DNA]</scope>
    <source>
        <strain>Isolate SAS-4</strain>
        <strain>Isolate SAS-5</strain>
        <strain>Isolate SAS-6</strain>
        <strain>Isolate SAS-8</strain>
        <strain>Isolate SM-1</strain>
        <strain>Isolate SM-2</strain>
        <strain>Isolate SM-3</strain>
    </source>
</reference>
<protein>
    <recommendedName>
        <fullName>Cytochrome b</fullName>
    </recommendedName>
    <alternativeName>
        <fullName>Complex III subunit 3</fullName>
    </alternativeName>
    <alternativeName>
        <fullName>Complex III subunit III</fullName>
    </alternativeName>
    <alternativeName>
        <fullName>Cytochrome b-c1 complex subunit 3</fullName>
    </alternativeName>
    <alternativeName>
        <fullName>Ubiquinol-cytochrome-c reductase complex cytochrome b subunit</fullName>
    </alternativeName>
</protein>
<sequence>MTNIRKTHPLMKIVNSSFIDLPAPSNISSWWNFGSLLGICLIIQILTGLFLAMHYTSDTMTAFSSVTHICRDVNYGWLIRYLHANGASMFFICLFLHVGRGLYYGSYMFMETWNIGVLLLFAVMATAFMGYVLPWGQMSFWGATVITNLLSAIPYIGTDLVEWIWGGFSVDKATLTRFFAFHFILPFIIAALAGVHLLFLHETGSNNPSGLSSDSDKIPFHPYYTIKDILGILILILALSSLVLFSPDLLGDPDNYIPANPLNTPPHIKPEWYFLFAYAILRSIPNKLGGVLALVFSILVLALMPFLHTSKQRSMMFRPISQCLFWVLVADLLTLTWIGGQPVEHPFVIIGQLASILYFSLILILMPLASLMENNLLKW</sequence>
<accession>Q85C06</accession>
<accession>Q85DE8</accession>
<accession>Q85DE9</accession>
<evidence type="ECO:0000250" key="1"/>
<evidence type="ECO:0000250" key="2">
    <source>
        <dbReference type="UniProtKB" id="P00157"/>
    </source>
</evidence>
<evidence type="ECO:0000255" key="3">
    <source>
        <dbReference type="PROSITE-ProRule" id="PRU00967"/>
    </source>
</evidence>
<evidence type="ECO:0000255" key="4">
    <source>
        <dbReference type="PROSITE-ProRule" id="PRU00968"/>
    </source>
</evidence>